<protein>
    <recommendedName>
        <fullName>Uridine 5'-monophosphate synthase</fullName>
        <shortName>UMP synthase</shortName>
    </recommendedName>
    <domain>
        <recommendedName>
            <fullName>Orotate phosphoribosyltransferase</fullName>
            <shortName>OPRTase</shortName>
            <ecNumber evidence="1">2.4.2.10</ecNumber>
        </recommendedName>
    </domain>
    <domain>
        <recommendedName>
            <fullName>Orotidine 5'-phosphate decarboxylase</fullName>
            <ecNumber evidence="1">4.1.1.23</ecNumber>
        </recommendedName>
        <alternativeName>
            <fullName>OMPdecase</fullName>
        </alternativeName>
    </domain>
</protein>
<name>UMPS_PONAB</name>
<accession>Q5R514</accession>
<proteinExistence type="evidence at transcript level"/>
<organism>
    <name type="scientific">Pongo abelii</name>
    <name type="common">Sumatran orangutan</name>
    <name type="synonym">Pongo pygmaeus abelii</name>
    <dbReference type="NCBI Taxonomy" id="9601"/>
    <lineage>
        <taxon>Eukaryota</taxon>
        <taxon>Metazoa</taxon>
        <taxon>Chordata</taxon>
        <taxon>Craniata</taxon>
        <taxon>Vertebrata</taxon>
        <taxon>Euteleostomi</taxon>
        <taxon>Mammalia</taxon>
        <taxon>Eutheria</taxon>
        <taxon>Euarchontoglires</taxon>
        <taxon>Primates</taxon>
        <taxon>Haplorrhini</taxon>
        <taxon>Catarrhini</taxon>
        <taxon>Hominidae</taxon>
        <taxon>Pongo</taxon>
    </lineage>
</organism>
<feature type="initiator methionine" description="Removed" evidence="1">
    <location>
        <position position="1"/>
    </location>
</feature>
<feature type="chain" id="PRO_0000257814" description="Uridine 5'-monophosphate synthase">
    <location>
        <begin position="2"/>
        <end position="480"/>
    </location>
</feature>
<feature type="region of interest" description="OPRTase">
    <location>
        <begin position="2"/>
        <end position="214"/>
    </location>
</feature>
<feature type="region of interest" description="Domain linker">
    <location>
        <begin position="215"/>
        <end position="220"/>
    </location>
</feature>
<feature type="region of interest" description="OMPdecase">
    <location>
        <begin position="221"/>
        <end position="480"/>
    </location>
</feature>
<feature type="active site" description="For OMPdecase activity" evidence="1">
    <location>
        <position position="314"/>
    </location>
</feature>
<feature type="active site" description="For OMPdecase activity" evidence="1">
    <location>
        <position position="317"/>
    </location>
</feature>
<feature type="binding site" evidence="1">
    <location>
        <position position="257"/>
    </location>
    <ligand>
        <name>orotidine 5'-phosphate</name>
        <dbReference type="ChEBI" id="CHEBI:57538"/>
    </ligand>
</feature>
<feature type="binding site" evidence="1">
    <location>
        <position position="257"/>
    </location>
    <ligand>
        <name>UMP</name>
        <dbReference type="ChEBI" id="CHEBI:57865"/>
    </ligand>
</feature>
<feature type="binding site" evidence="1">
    <location>
        <position position="259"/>
    </location>
    <ligand>
        <name>UMP</name>
        <dbReference type="ChEBI" id="CHEBI:57865"/>
    </ligand>
</feature>
<feature type="binding site" evidence="1">
    <location>
        <begin position="281"/>
        <end position="283"/>
    </location>
    <ligand>
        <name>UMP</name>
        <dbReference type="ChEBI" id="CHEBI:57865"/>
    </ligand>
</feature>
<feature type="binding site" evidence="1">
    <location>
        <position position="281"/>
    </location>
    <ligand>
        <name>orotidine 5'-phosphate</name>
        <dbReference type="ChEBI" id="CHEBI:57538"/>
    </ligand>
</feature>
<feature type="binding site" evidence="1">
    <location>
        <position position="314"/>
    </location>
    <ligand>
        <name>orotidine 5'-phosphate</name>
        <dbReference type="ChEBI" id="CHEBI:57538"/>
    </ligand>
</feature>
<feature type="binding site" evidence="1">
    <location>
        <position position="317"/>
    </location>
    <ligand>
        <name>orotidine 5'-phosphate</name>
        <dbReference type="ChEBI" id="CHEBI:57538"/>
    </ligand>
</feature>
<feature type="binding site" evidence="1">
    <location>
        <position position="317"/>
    </location>
    <ligand>
        <name>UMP</name>
        <dbReference type="ChEBI" id="CHEBI:57865"/>
    </ligand>
</feature>
<feature type="binding site" evidence="1">
    <location>
        <position position="321"/>
    </location>
    <ligand>
        <name>orotidine 5'-phosphate</name>
        <dbReference type="ChEBI" id="CHEBI:57538"/>
    </ligand>
</feature>
<feature type="binding site" evidence="1">
    <location>
        <position position="321"/>
    </location>
    <ligand>
        <name>UMP</name>
        <dbReference type="ChEBI" id="CHEBI:57865"/>
    </ligand>
</feature>
<feature type="binding site" evidence="1">
    <location>
        <position position="372"/>
    </location>
    <ligand>
        <name>orotidine 5'-phosphate</name>
        <dbReference type="ChEBI" id="CHEBI:57538"/>
    </ligand>
</feature>
<feature type="binding site" evidence="1">
    <location>
        <position position="372"/>
    </location>
    <ligand>
        <name>UMP</name>
        <dbReference type="ChEBI" id="CHEBI:57865"/>
    </ligand>
</feature>
<feature type="binding site" evidence="1">
    <location>
        <begin position="430"/>
        <end position="432"/>
    </location>
    <ligand>
        <name>orotidine 5'-phosphate</name>
        <dbReference type="ChEBI" id="CHEBI:57538"/>
    </ligand>
</feature>
<feature type="binding site" evidence="1">
    <location>
        <begin position="430"/>
        <end position="432"/>
    </location>
    <ligand>
        <name>UMP</name>
        <dbReference type="ChEBI" id="CHEBI:57865"/>
    </ligand>
</feature>
<feature type="binding site" evidence="1">
    <location>
        <begin position="450"/>
        <end position="451"/>
    </location>
    <ligand>
        <name>orotidine 5'-phosphate</name>
        <dbReference type="ChEBI" id="CHEBI:57538"/>
    </ligand>
</feature>
<feature type="binding site" evidence="1">
    <location>
        <begin position="450"/>
        <end position="451"/>
    </location>
    <ligand>
        <name>UMP</name>
        <dbReference type="ChEBI" id="CHEBI:57865"/>
    </ligand>
</feature>
<feature type="modified residue" description="N-acetylalanine" evidence="1">
    <location>
        <position position="2"/>
    </location>
</feature>
<feature type="modified residue" description="Phosphotyrosine" evidence="1">
    <location>
        <position position="37"/>
    </location>
</feature>
<feature type="modified residue" description="Phosphoserine" evidence="1">
    <location>
        <position position="214"/>
    </location>
</feature>
<reference key="1">
    <citation type="submission" date="2004-11" db="EMBL/GenBank/DDBJ databases">
        <authorList>
            <consortium name="The German cDNA consortium"/>
        </authorList>
    </citation>
    <scope>NUCLEOTIDE SEQUENCE [LARGE SCALE MRNA]</scope>
    <source>
        <tissue>Brain cortex</tissue>
    </source>
</reference>
<keyword id="KW-0007">Acetylation</keyword>
<keyword id="KW-0210">Decarboxylase</keyword>
<keyword id="KW-0328">Glycosyltransferase</keyword>
<keyword id="KW-0456">Lyase</keyword>
<keyword id="KW-0511">Multifunctional enzyme</keyword>
<keyword id="KW-0597">Phosphoprotein</keyword>
<keyword id="KW-0665">Pyrimidine biosynthesis</keyword>
<keyword id="KW-1185">Reference proteome</keyword>
<keyword id="KW-0808">Transferase</keyword>
<comment type="function">
    <text evidence="1">Bifunctional enzyme catalyzing the last two steps of de novo pyrimidine biosynthesis, orotate phosphoribosyltransferase (OPRT), which converts orotate to orotidine-5'-monophosphate (OMP), and orotidine-5'-monophosphate decarboxylase (ODC), the terminal enzymatic reaction that decarboxylates OMP to uridine monophosphate (UMP).</text>
</comment>
<comment type="catalytic activity">
    <reaction evidence="1">
        <text>orotidine 5'-phosphate + diphosphate = orotate + 5-phospho-alpha-D-ribose 1-diphosphate</text>
        <dbReference type="Rhea" id="RHEA:10380"/>
        <dbReference type="ChEBI" id="CHEBI:30839"/>
        <dbReference type="ChEBI" id="CHEBI:33019"/>
        <dbReference type="ChEBI" id="CHEBI:57538"/>
        <dbReference type="ChEBI" id="CHEBI:58017"/>
        <dbReference type="EC" id="2.4.2.10"/>
    </reaction>
    <physiologicalReaction direction="right-to-left" evidence="1">
        <dbReference type="Rhea" id="RHEA:10382"/>
    </physiologicalReaction>
</comment>
<comment type="catalytic activity">
    <reaction evidence="1">
        <text>orotidine 5'-phosphate + H(+) = UMP + CO2</text>
        <dbReference type="Rhea" id="RHEA:11596"/>
        <dbReference type="ChEBI" id="CHEBI:15378"/>
        <dbReference type="ChEBI" id="CHEBI:16526"/>
        <dbReference type="ChEBI" id="CHEBI:57538"/>
        <dbReference type="ChEBI" id="CHEBI:57865"/>
        <dbReference type="EC" id="4.1.1.23"/>
    </reaction>
    <physiologicalReaction direction="left-to-right" evidence="1">
        <dbReference type="Rhea" id="RHEA:11597"/>
    </physiologicalReaction>
</comment>
<comment type="pathway">
    <text evidence="1">Pyrimidine metabolism; UMP biosynthesis via de novo pathway; UMP from orotate: step 1/2.</text>
</comment>
<comment type="pathway">
    <text evidence="1">Pyrimidine metabolism; UMP biosynthesis via de novo pathway; UMP from orotate: step 2/2.</text>
</comment>
<comment type="subunit">
    <text evidence="1">Homodimer; dimerization is required for enzymatic activity.</text>
</comment>
<comment type="similarity">
    <text evidence="2">In the N-terminal section; belongs to the purine/pyrimidine phosphoribosyltransferase family.</text>
</comment>
<comment type="similarity">
    <text evidence="2">In the C-terminal section; belongs to the OMP decarboxylase family.</text>
</comment>
<evidence type="ECO:0000250" key="1">
    <source>
        <dbReference type="UniProtKB" id="P11172"/>
    </source>
</evidence>
<evidence type="ECO:0000305" key="2"/>
<gene>
    <name type="primary">UMPS</name>
</gene>
<dbReference type="EC" id="2.4.2.10" evidence="1"/>
<dbReference type="EC" id="4.1.1.23" evidence="1"/>
<dbReference type="EMBL" id="CR861071">
    <property type="protein sequence ID" value="CAH93152.1"/>
    <property type="molecule type" value="mRNA"/>
</dbReference>
<dbReference type="RefSeq" id="NP_001126858.1">
    <property type="nucleotide sequence ID" value="NM_001133386.1"/>
</dbReference>
<dbReference type="SMR" id="Q5R514"/>
<dbReference type="FunCoup" id="Q5R514">
    <property type="interactions" value="4156"/>
</dbReference>
<dbReference type="STRING" id="9601.ENSPPYP00000015062"/>
<dbReference type="GeneID" id="100173867"/>
<dbReference type="KEGG" id="pon:100173867"/>
<dbReference type="CTD" id="7372"/>
<dbReference type="eggNOG" id="KOG1377">
    <property type="taxonomic scope" value="Eukaryota"/>
</dbReference>
<dbReference type="InParanoid" id="Q5R514"/>
<dbReference type="OrthoDB" id="10263753at2759"/>
<dbReference type="UniPathway" id="UPA00070">
    <property type="reaction ID" value="UER00119"/>
</dbReference>
<dbReference type="UniPathway" id="UPA00070">
    <property type="reaction ID" value="UER00120"/>
</dbReference>
<dbReference type="Proteomes" id="UP000001595">
    <property type="component" value="Unplaced"/>
</dbReference>
<dbReference type="GO" id="GO:0004588">
    <property type="term" value="F:orotate phosphoribosyltransferase activity"/>
    <property type="evidence" value="ECO:0000250"/>
    <property type="project" value="UniProtKB"/>
</dbReference>
<dbReference type="GO" id="GO:0004590">
    <property type="term" value="F:orotidine-5'-phosphate decarboxylase activity"/>
    <property type="evidence" value="ECO:0000250"/>
    <property type="project" value="UniProtKB"/>
</dbReference>
<dbReference type="GO" id="GO:0006207">
    <property type="term" value="P:'de novo' pyrimidine nucleobase biosynthetic process"/>
    <property type="evidence" value="ECO:0007669"/>
    <property type="project" value="InterPro"/>
</dbReference>
<dbReference type="GO" id="GO:0044205">
    <property type="term" value="P:'de novo' UMP biosynthetic process"/>
    <property type="evidence" value="ECO:0007669"/>
    <property type="project" value="UniProtKB-UniPathway"/>
</dbReference>
<dbReference type="GO" id="GO:0006222">
    <property type="term" value="P:UMP biosynthetic process"/>
    <property type="evidence" value="ECO:0000250"/>
    <property type="project" value="UniProtKB"/>
</dbReference>
<dbReference type="CDD" id="cd04725">
    <property type="entry name" value="OMP_decarboxylase_like"/>
    <property type="match status" value="1"/>
</dbReference>
<dbReference type="CDD" id="cd06223">
    <property type="entry name" value="PRTases_typeI"/>
    <property type="match status" value="1"/>
</dbReference>
<dbReference type="FunFam" id="3.20.20.70:FF:000092">
    <property type="entry name" value="Uridine monophosphate synthetase"/>
    <property type="match status" value="1"/>
</dbReference>
<dbReference type="FunFam" id="3.40.50.2020:FF:000025">
    <property type="entry name" value="Uridine monophosphate synthetase"/>
    <property type="match status" value="1"/>
</dbReference>
<dbReference type="Gene3D" id="3.40.50.2020">
    <property type="match status" value="1"/>
</dbReference>
<dbReference type="Gene3D" id="3.20.20.70">
    <property type="entry name" value="Aldolase class I"/>
    <property type="match status" value="1"/>
</dbReference>
<dbReference type="HAMAP" id="MF_01208">
    <property type="entry name" value="PyrE"/>
    <property type="match status" value="1"/>
</dbReference>
<dbReference type="InterPro" id="IPR013785">
    <property type="entry name" value="Aldolase_TIM"/>
</dbReference>
<dbReference type="InterPro" id="IPR014732">
    <property type="entry name" value="OMPdecase"/>
</dbReference>
<dbReference type="InterPro" id="IPR018089">
    <property type="entry name" value="OMPdecase_AS"/>
</dbReference>
<dbReference type="InterPro" id="IPR001754">
    <property type="entry name" value="OMPdeCOase_dom"/>
</dbReference>
<dbReference type="InterPro" id="IPR023031">
    <property type="entry name" value="OPRT"/>
</dbReference>
<dbReference type="InterPro" id="IPR004467">
    <property type="entry name" value="Or_phspho_trans_dom"/>
</dbReference>
<dbReference type="InterPro" id="IPR000836">
    <property type="entry name" value="PRibTrfase_dom"/>
</dbReference>
<dbReference type="InterPro" id="IPR029057">
    <property type="entry name" value="PRTase-like"/>
</dbReference>
<dbReference type="InterPro" id="IPR011060">
    <property type="entry name" value="RibuloseP-bd_barrel"/>
</dbReference>
<dbReference type="NCBIfam" id="TIGR00336">
    <property type="entry name" value="pyrE"/>
    <property type="match status" value="1"/>
</dbReference>
<dbReference type="NCBIfam" id="TIGR01740">
    <property type="entry name" value="pyrF"/>
    <property type="match status" value="1"/>
</dbReference>
<dbReference type="PANTHER" id="PTHR19278">
    <property type="entry name" value="OROTATE PHOSPHORIBOSYLTRANSFERASE"/>
    <property type="match status" value="1"/>
</dbReference>
<dbReference type="PANTHER" id="PTHR19278:SF9">
    <property type="entry name" value="URIDINE 5'-MONOPHOSPHATE SYNTHASE"/>
    <property type="match status" value="1"/>
</dbReference>
<dbReference type="Pfam" id="PF00215">
    <property type="entry name" value="OMPdecase"/>
    <property type="match status" value="1"/>
</dbReference>
<dbReference type="Pfam" id="PF00156">
    <property type="entry name" value="Pribosyltran"/>
    <property type="match status" value="1"/>
</dbReference>
<dbReference type="SMART" id="SM00934">
    <property type="entry name" value="OMPdecase"/>
    <property type="match status" value="1"/>
</dbReference>
<dbReference type="SUPFAM" id="SSF53271">
    <property type="entry name" value="PRTase-like"/>
    <property type="match status" value="1"/>
</dbReference>
<dbReference type="SUPFAM" id="SSF51366">
    <property type="entry name" value="Ribulose-phoshate binding barrel"/>
    <property type="match status" value="1"/>
</dbReference>
<dbReference type="PROSITE" id="PS00156">
    <property type="entry name" value="OMPDECASE"/>
    <property type="match status" value="1"/>
</dbReference>
<dbReference type="PROSITE" id="PS00103">
    <property type="entry name" value="PUR_PYR_PR_TRANSFER"/>
    <property type="match status" value="1"/>
</dbReference>
<sequence>MAAVGAALGPLVTGLYDVQAFKFGDFVLKSGLSSPIYIDLRGIVSRPRLLSQVADTLFQTAQNAGISFDTVCGVPYTALPLATVICSTNQIPMLIRRKETKDYGTKRLVEGTINPGETCLIIEDVVTSGSSVLETAEVLQKEGLKVTDAIVLLDREQGGKDKLQAHGIRLHSVCTLSKMLEILEQQKKIDAETVGRVKRFIQENVFVAANHNGSPLSIKEAPKELSFSARAELPRIHPVASKLLRLMQKKETNLCLSADVSEARELLQLADALGPSICMLKTHVDILNDFTLDVMKELITLAKRHEFLIFEDRKFADIGNTVKKQYEGGVFKIASWADLVNAHVVPGSGVVKGLQEVGLPLHRGCLLIAEMSSTGSLATGDYTRAAVRMAEEHSEFVVGFISGSRVSMKPEFLHLTPGVQLEAGGDNLGQQYNSPQEVIGKRGSDIIIVGRGIISAADCLEAAEMYRKAAWEAYLSRLGV</sequence>